<protein>
    <recommendedName>
        <fullName>U3 small nucleolar RNA-associated protein 10</fullName>
    </recommendedName>
</protein>
<comment type="function">
    <text evidence="1">Involved in nucleolar processing of pre-18S ribosomal RNA. Involved in ribosome biosynthesis (By similarity).</text>
</comment>
<comment type="subunit">
    <text evidence="1">Component of the ribosomal small subunit (SSU) processome.</text>
</comment>
<comment type="subcellular location">
    <subcellularLocation>
        <location evidence="1">Nucleus</location>
        <location evidence="1">Nucleolus</location>
    </subcellularLocation>
</comment>
<comment type="similarity">
    <text evidence="3">Belongs to the HEATR1/UTP10 family.</text>
</comment>
<accession>Q1DHH9</accession>
<accession>I9NSK4</accession>
<gene>
    <name evidence="1" type="primary">UTP10</name>
    <name type="ORF">CIMG_10234</name>
</gene>
<reference key="1">
    <citation type="journal article" date="2009" name="Genome Res.">
        <title>Comparative genomic analyses of the human fungal pathogens Coccidioides and their relatives.</title>
        <authorList>
            <person name="Sharpton T.J."/>
            <person name="Stajich J.E."/>
            <person name="Rounsley S.D."/>
            <person name="Gardner M.J."/>
            <person name="Wortman J.R."/>
            <person name="Jordar V.S."/>
            <person name="Maiti R."/>
            <person name="Kodira C.D."/>
            <person name="Neafsey D.E."/>
            <person name="Zeng Q."/>
            <person name="Hung C.-Y."/>
            <person name="McMahan C."/>
            <person name="Muszewska A."/>
            <person name="Grynberg M."/>
            <person name="Mandel M.A."/>
            <person name="Kellner E.M."/>
            <person name="Barker B.M."/>
            <person name="Galgiani J.N."/>
            <person name="Orbach M.J."/>
            <person name="Kirkland T.N."/>
            <person name="Cole G.T."/>
            <person name="Henn M.R."/>
            <person name="Birren B.W."/>
            <person name="Taylor J.W."/>
        </authorList>
    </citation>
    <scope>NUCLEOTIDE SEQUENCE [LARGE SCALE GENOMIC DNA]</scope>
    <source>
        <strain>RS</strain>
    </source>
</reference>
<reference key="2">
    <citation type="journal article" date="2010" name="Genome Res.">
        <title>Population genomic sequencing of Coccidioides fungi reveals recent hybridization and transposon control.</title>
        <authorList>
            <person name="Neafsey D.E."/>
            <person name="Barker B.M."/>
            <person name="Sharpton T.J."/>
            <person name="Stajich J.E."/>
            <person name="Park D.J."/>
            <person name="Whiston E."/>
            <person name="Hung C.-Y."/>
            <person name="McMahan C."/>
            <person name="White J."/>
            <person name="Sykes S."/>
            <person name="Heiman D."/>
            <person name="Young S."/>
            <person name="Zeng Q."/>
            <person name="Abouelleil A."/>
            <person name="Aftuck L."/>
            <person name="Bessette D."/>
            <person name="Brown A."/>
            <person name="FitzGerald M."/>
            <person name="Lui A."/>
            <person name="Macdonald J.P."/>
            <person name="Priest M."/>
            <person name="Orbach M.J."/>
            <person name="Galgiani J.N."/>
            <person name="Kirkland T.N."/>
            <person name="Cole G.T."/>
            <person name="Birren B.W."/>
            <person name="Henn M.R."/>
            <person name="Taylor J.W."/>
            <person name="Rounsley S.D."/>
        </authorList>
    </citation>
    <scope>GENOME REANNOTATION</scope>
    <source>
        <strain>RS</strain>
    </source>
</reference>
<evidence type="ECO:0000250" key="1">
    <source>
        <dbReference type="UniProtKB" id="P42945"/>
    </source>
</evidence>
<evidence type="ECO:0000256" key="2">
    <source>
        <dbReference type="SAM" id="MobiDB-lite"/>
    </source>
</evidence>
<evidence type="ECO:0000305" key="3"/>
<organism>
    <name type="scientific">Coccidioides immitis (strain RS)</name>
    <name type="common">Valley fever fungus</name>
    <dbReference type="NCBI Taxonomy" id="246410"/>
    <lineage>
        <taxon>Eukaryota</taxon>
        <taxon>Fungi</taxon>
        <taxon>Dikarya</taxon>
        <taxon>Ascomycota</taxon>
        <taxon>Pezizomycotina</taxon>
        <taxon>Eurotiomycetes</taxon>
        <taxon>Eurotiomycetidae</taxon>
        <taxon>Onygenales</taxon>
        <taxon>Onygenaceae</taxon>
        <taxon>Coccidioides</taxon>
    </lineage>
</organism>
<proteinExistence type="inferred from homology"/>
<dbReference type="EMBL" id="GG704915">
    <property type="protein sequence ID" value="EAS27629.3"/>
    <property type="molecule type" value="Genomic_DNA"/>
</dbReference>
<dbReference type="RefSeq" id="XP_001239212.2">
    <property type="nucleotide sequence ID" value="XM_001239211.2"/>
</dbReference>
<dbReference type="SMR" id="Q1DHH9"/>
<dbReference type="FunCoup" id="Q1DHH9">
    <property type="interactions" value="1071"/>
</dbReference>
<dbReference type="STRING" id="246410.Q1DHH9"/>
<dbReference type="GeneID" id="4558029"/>
<dbReference type="KEGG" id="cim:CIMG_10234"/>
<dbReference type="VEuPathDB" id="FungiDB:CIMG_10234"/>
<dbReference type="InParanoid" id="Q1DHH9"/>
<dbReference type="OMA" id="NDVMWKQ"/>
<dbReference type="OrthoDB" id="31183at2759"/>
<dbReference type="Proteomes" id="UP000001261">
    <property type="component" value="Unassembled WGS sequence"/>
</dbReference>
<dbReference type="GO" id="GO:0030686">
    <property type="term" value="C:90S preribosome"/>
    <property type="evidence" value="ECO:0007669"/>
    <property type="project" value="TreeGrafter"/>
</dbReference>
<dbReference type="GO" id="GO:0032040">
    <property type="term" value="C:small-subunit processome"/>
    <property type="evidence" value="ECO:0007669"/>
    <property type="project" value="TreeGrafter"/>
</dbReference>
<dbReference type="GO" id="GO:0034455">
    <property type="term" value="C:t-UTP complex"/>
    <property type="evidence" value="ECO:0007669"/>
    <property type="project" value="TreeGrafter"/>
</dbReference>
<dbReference type="GO" id="GO:0030515">
    <property type="term" value="F:snoRNA binding"/>
    <property type="evidence" value="ECO:0007669"/>
    <property type="project" value="TreeGrafter"/>
</dbReference>
<dbReference type="GO" id="GO:0000462">
    <property type="term" value="P:maturation of SSU-rRNA from tricistronic rRNA transcript (SSU-rRNA, 5.8S rRNA, LSU-rRNA)"/>
    <property type="evidence" value="ECO:0007669"/>
    <property type="project" value="TreeGrafter"/>
</dbReference>
<dbReference type="GO" id="GO:0045943">
    <property type="term" value="P:positive regulation of transcription by RNA polymerase I"/>
    <property type="evidence" value="ECO:0007669"/>
    <property type="project" value="TreeGrafter"/>
</dbReference>
<dbReference type="Gene3D" id="1.25.10.10">
    <property type="entry name" value="Leucine-rich Repeat Variant"/>
    <property type="match status" value="1"/>
</dbReference>
<dbReference type="InterPro" id="IPR011989">
    <property type="entry name" value="ARM-like"/>
</dbReference>
<dbReference type="InterPro" id="IPR016024">
    <property type="entry name" value="ARM-type_fold"/>
</dbReference>
<dbReference type="InterPro" id="IPR012954">
    <property type="entry name" value="BP28_C_dom"/>
</dbReference>
<dbReference type="InterPro" id="IPR021133">
    <property type="entry name" value="HEAT_type_2"/>
</dbReference>
<dbReference type="InterPro" id="IPR056473">
    <property type="entry name" value="HEAT_Utp10/HEAT1"/>
</dbReference>
<dbReference type="InterPro" id="IPR022125">
    <property type="entry name" value="U3snoRNP10_N"/>
</dbReference>
<dbReference type="InterPro" id="IPR040191">
    <property type="entry name" value="UTP10"/>
</dbReference>
<dbReference type="PANTHER" id="PTHR13457">
    <property type="entry name" value="BAP28"/>
    <property type="match status" value="1"/>
</dbReference>
<dbReference type="PANTHER" id="PTHR13457:SF1">
    <property type="entry name" value="HEAT REPEAT-CONTAINING PROTEIN 1"/>
    <property type="match status" value="1"/>
</dbReference>
<dbReference type="Pfam" id="PF08146">
    <property type="entry name" value="BP28CT"/>
    <property type="match status" value="1"/>
</dbReference>
<dbReference type="Pfam" id="PF23243">
    <property type="entry name" value="HEAT_HEATR1"/>
    <property type="match status" value="1"/>
</dbReference>
<dbReference type="Pfam" id="PF12397">
    <property type="entry name" value="U3snoRNP10"/>
    <property type="match status" value="1"/>
</dbReference>
<dbReference type="SMART" id="SM01036">
    <property type="entry name" value="BP28CT"/>
    <property type="match status" value="1"/>
</dbReference>
<dbReference type="SUPFAM" id="SSF48371">
    <property type="entry name" value="ARM repeat"/>
    <property type="match status" value="2"/>
</dbReference>
<dbReference type="PROSITE" id="PS50077">
    <property type="entry name" value="HEAT_REPEAT"/>
    <property type="match status" value="1"/>
</dbReference>
<keyword id="KW-0539">Nucleus</keyword>
<keyword id="KW-1185">Reference proteome</keyword>
<keyword id="KW-0677">Repeat</keyword>
<keyword id="KW-0687">Ribonucleoprotein</keyword>
<keyword id="KW-0690">Ribosome biogenesis</keyword>
<keyword id="KW-0698">rRNA processing</keyword>
<sequence>MASSLAAQLAQIAATSTHQLDLKAQRAAHSQSLIFEKKIAGSQDFDTIFQVCHEGFQELCSLDSRFLSFRRNIFSDQSKTEDRGQMTTSQNKELDSVLEDFLSLVGARLLLTPAVKAVDWLIRRFRVHEYNTSFLLLTFLPYHTTPLFLNFLSILPEDLTQTFKVFLPYKRSMTLPPRQVIVQSASTNKSFFSALNNYVLQVSKSQAHYQGLVSFWAGITTEALANMLDSAKSGRMEIETRNKEDVLIRILPVLNDAFMLRKAPQLVVGCYMLCVVLANKASLEDHVLDNLMEAVTGSWTQTNFVSGITCLSVLSQQKHEKSLPSKVVKAVLRLDNVIEVFEELSGRYAVTGLIIGLIRSCVQENGKRSDPARIPFVGQLIQRAILSDSETIEALTILLQAFSDLQRQGLVADGMGKQLSDLLLQFNESDTLAPLLRKAIENAGVDITQLEMTLETVLQADIMPMEIEDADLLDFISSSQTQDAFAVALEPLSQAAITESSFLAPGSSLLFDQLAEAFIHGASTKDRVSRFIKLPVLRPDKPLDDPLYLSFFIRFFSGPYPVTARTVAISIVSSCITAMADKSADMQGILPYIISALADPSERVRREAAALLSLIDRLASKCKDNDDSNAQIWGRGCLYGQNERSESVQFLPMKDIYKIIHHALMPALEEYVLDPDQVGRTLTQVIRGPRSQDDSDRTRSESTGVEFKKPLRRDLFLFLCSHASKTALYTVKLRLLKFLNKVGKIGSLNCTEALRQVFDQWRLLSLEHLQRIEDGERISTNELEDQVLSIIYPKDMDAVDLLFSSLTSNSRSNRESFLTAGFNRLKEVWPSLEETHELSLANRLLQISLSLENGKLAGAAKGLLRSVDLSGPVILEFLNKISASVPDLGSRGPPSKKRRTSQNNMVPMSSMDKETDSVLQKMTFILELIDSSHSENHPELISGLFQTLTIIHHLKLQTRSEMSYLLSLNLGILLSIVNKWKGMPTRKINTSSIRADLIIDCVRTSESPQVQNTALLLVAGLATVAPELVLHSVMPIFTFMGSSVLRKDDEYSALVIDQTIDQVVPPLVQSLRNQKRDVVSGTSELLLSFTTAFEHIPSYRRLRLFEALITKLGPEDFLFAVFAMFANRYSMDKDVLATMTALASDCNAELQLITYARYLNLVKDTLQPKPTLAKTLLGVGSEDGRDPQKIAVDLLQALSHLLKFTSLRTKMSECFDSGTEQQVDKAHGLFSTILEQTLALSESVRTVKPVNSACGETLGTLLGTLSLVDFVDTIEVLLQRPSDDLRRKVIKLLENRLDSSNDRDKASQARVLSFLTVLINILETSPDILLKHAAVACIEKIGEKYGKKDPSQVLAAAKVISGEHCLGQPDRRIRVMGLLCLASMSEILGEGIIPTLPEALPRAIDLLRDTLAASDDDSQLHDAVYSLISALLIHVPWMISGEYLDNILQLSFISSNTDLAEGSDENRLEALQLLAKRVDVKEAFAGVERNWDSAVTQGSRAVQEALDVVRTAIEKHAKSATVKNVSVLMKLLCKAFDLRRLQLSPLNDGGFDEAEVDEIESRANDVAVRMIYKLNDTVFRPLFIDLTAWAVSGLGKKDTTGRVARLTTFYRFLESFFGTLKSIVTGYSSYIIESAVEVLKFSRCNDKATKTLWLAVLRMLRNSFGHDQDEFWQSPTHLASISEPLIKQLSMATNSPTLDLVAAEAIPTIVELAVAADSPDNHKELNTVIMKFMRAGHGNARGADNPYTRLAAVKCEQQLTERLGEEWLALLPEMLPYISELLEDDDENVEREVRRWVLSIEDILGEKLDDMLT</sequence>
<name>UTP10_COCIM</name>
<feature type="chain" id="PRO_0000308501" description="U3 small nucleolar RNA-associated protein 10">
    <location>
        <begin position="1"/>
        <end position="1813"/>
    </location>
</feature>
<feature type="repeat" description="HEAT 1">
    <location>
        <begin position="245"/>
        <end position="283"/>
    </location>
</feature>
<feature type="repeat" description="HEAT 2">
    <location>
        <begin position="389"/>
        <end position="427"/>
    </location>
</feature>
<feature type="repeat" description="HEAT 3">
    <location>
        <begin position="428"/>
        <end position="464"/>
    </location>
</feature>
<feature type="repeat" description="HEAT 4">
    <location>
        <begin position="584"/>
        <end position="621"/>
    </location>
</feature>
<feature type="repeat" description="HEAT 5">
    <location>
        <begin position="659"/>
        <end position="695"/>
    </location>
</feature>
<feature type="repeat" description="HEAT 6">
    <location>
        <begin position="1058"/>
        <end position="1095"/>
    </location>
</feature>
<feature type="repeat" description="HEAT 7">
    <location>
        <begin position="1189"/>
        <end position="1228"/>
    </location>
</feature>
<feature type="repeat" description="HEAT 8">
    <location>
        <begin position="1265"/>
        <end position="1302"/>
    </location>
</feature>
<feature type="repeat" description="HEAT 9">
    <location>
        <begin position="1309"/>
        <end position="1347"/>
    </location>
</feature>
<feature type="repeat" description="HEAT 10">
    <location>
        <begin position="1398"/>
        <end position="1437"/>
    </location>
</feature>
<feature type="repeat" description="HEAT 11">
    <location>
        <begin position="1678"/>
        <end position="1715"/>
    </location>
</feature>
<feature type="repeat" description="HEAT 12">
    <location>
        <begin position="1769"/>
        <end position="1806"/>
    </location>
</feature>
<feature type="region of interest" description="Disordered" evidence="2">
    <location>
        <begin position="686"/>
        <end position="705"/>
    </location>
</feature>
<feature type="region of interest" description="Disordered" evidence="2">
    <location>
        <begin position="887"/>
        <end position="912"/>
    </location>
</feature>
<feature type="compositionally biased region" description="Basic and acidic residues" evidence="2">
    <location>
        <begin position="690"/>
        <end position="705"/>
    </location>
</feature>